<organism>
    <name type="scientific">Schizosaccharomyces pombe (strain 972 / ATCC 24843)</name>
    <name type="common">Fission yeast</name>
    <dbReference type="NCBI Taxonomy" id="284812"/>
    <lineage>
        <taxon>Eukaryota</taxon>
        <taxon>Fungi</taxon>
        <taxon>Dikarya</taxon>
        <taxon>Ascomycota</taxon>
        <taxon>Taphrinomycotina</taxon>
        <taxon>Schizosaccharomycetes</taxon>
        <taxon>Schizosaccharomycetales</taxon>
        <taxon>Schizosaccharomycetaceae</taxon>
        <taxon>Schizosaccharomyces</taxon>
    </lineage>
</organism>
<comment type="function">
    <text evidence="2">Regulatory subunit of the condensin complex, a complex required for conversion of interphase chromatin into mitotic-like condense chromosomes. The condensin complex probably introduces positive supercoils into relaxed DNA in the presence of type I topoisomerases and converts nicked DNA into positive knotted forms in the presence of type II topoisomerases. The condensin complex probably also plays a role during interphase.</text>
</comment>
<comment type="subunit">
    <text evidence="2">Component of the condensin complex, which contains the cut14/smc2 and cut3/smc2 heterodimer, and three non SMC subunits that probably regulate the complex: cnd1, cnd2 and cnd3.</text>
</comment>
<comment type="interaction">
    <interactant intactId="EBI-1149700">
        <id>Q10429</id>
    </interactant>
    <interactant intactId="EBI-1149594">
        <id>Q9Y7R3</id>
        <label>cnd2</label>
    </interactant>
    <organismsDiffer>false</organismsDiffer>
    <experiments>2</experiments>
</comment>
<comment type="subcellular location">
    <subcellularLocation>
        <location>Nucleus</location>
    </subcellularLocation>
    <subcellularLocation>
        <location>Cytoplasm</location>
    </subcellularLocation>
    <subcellularLocation>
        <location>Chromosome</location>
    </subcellularLocation>
    <text>In interphase cells, the majority of the condensin complex is found in the cytoplasm, while a minority of the complex is associated with chromatin. A subpopulation of the complex however remains associated with chromosome foci in interphase cells. During mitosis, most of the condensin complex is associated with the chromatin. At the onset of prophase, condensin associates with chromosome arms and to chromosome condensation. Dissociation from chromosomes is observed in late telophase.</text>
</comment>
<comment type="similarity">
    <text evidence="3">Belongs to the CND3 (condensin subunit 3) family.</text>
</comment>
<name>CND3_SCHPO</name>
<accession>Q10429</accession>
<evidence type="ECO:0000256" key="1">
    <source>
        <dbReference type="SAM" id="MobiDB-lite"/>
    </source>
</evidence>
<evidence type="ECO:0000269" key="2">
    <source>
    </source>
</evidence>
<evidence type="ECO:0000305" key="3"/>
<evidence type="ECO:0007829" key="4">
    <source>
        <dbReference type="PDB" id="5OQR"/>
    </source>
</evidence>
<feature type="chain" id="PRO_0000095045" description="Condensin complex subunit 3">
    <location>
        <begin position="1"/>
        <end position="875"/>
    </location>
</feature>
<feature type="repeat" description="HEAT 1">
    <location>
        <begin position="55"/>
        <end position="76"/>
    </location>
</feature>
<feature type="repeat" description="HEAT 2">
    <location>
        <begin position="77"/>
        <end position="113"/>
    </location>
</feature>
<feature type="repeat" description="HEAT 3">
    <location>
        <begin position="117"/>
        <end position="154"/>
    </location>
</feature>
<feature type="repeat" description="HEAT 4">
    <location>
        <begin position="157"/>
        <end position="192"/>
    </location>
</feature>
<feature type="repeat" description="HEAT 5">
    <location>
        <begin position="222"/>
        <end position="259"/>
    </location>
</feature>
<feature type="repeat" description="HEAT 6">
    <location>
        <begin position="379"/>
        <end position="418"/>
    </location>
</feature>
<feature type="repeat" description="HEAT 7">
    <location>
        <begin position="516"/>
        <end position="554"/>
    </location>
</feature>
<feature type="repeat" description="HEAT 8">
    <location>
        <begin position="556"/>
        <end position="591"/>
    </location>
</feature>
<feature type="repeat" description="HEAT 9">
    <location>
        <begin position="740"/>
        <end position="778"/>
    </location>
</feature>
<feature type="region of interest" description="Disordered" evidence="1">
    <location>
        <begin position="459"/>
        <end position="485"/>
    </location>
</feature>
<feature type="region of interest" description="Disordered" evidence="1">
    <location>
        <begin position="831"/>
        <end position="875"/>
    </location>
</feature>
<feature type="compositionally biased region" description="Basic and acidic residues" evidence="1">
    <location>
        <begin position="831"/>
        <end position="844"/>
    </location>
</feature>
<feature type="helix" evidence="4">
    <location>
        <begin position="3"/>
        <end position="9"/>
    </location>
</feature>
<feature type="helix" evidence="4">
    <location>
        <begin position="17"/>
        <end position="24"/>
    </location>
</feature>
<feature type="helix" evidence="4">
    <location>
        <begin position="33"/>
        <end position="42"/>
    </location>
</feature>
<feature type="turn" evidence="4">
    <location>
        <begin position="43"/>
        <end position="46"/>
    </location>
</feature>
<feature type="helix" evidence="4">
    <location>
        <begin position="52"/>
        <end position="69"/>
    </location>
</feature>
<feature type="helix" evidence="4">
    <location>
        <begin position="78"/>
        <end position="86"/>
    </location>
</feature>
<feature type="helix" evidence="4">
    <location>
        <begin position="87"/>
        <end position="89"/>
    </location>
</feature>
<feature type="helix" evidence="4">
    <location>
        <begin position="94"/>
        <end position="108"/>
    </location>
</feature>
<feature type="helix" evidence="4">
    <location>
        <begin position="116"/>
        <end position="129"/>
    </location>
</feature>
<feature type="helix" evidence="4">
    <location>
        <begin position="135"/>
        <end position="145"/>
    </location>
</feature>
<feature type="helix" evidence="4">
    <location>
        <begin position="146"/>
        <end position="148"/>
    </location>
</feature>
<feature type="strand" evidence="4">
    <location>
        <begin position="153"/>
        <end position="155"/>
    </location>
</feature>
<feature type="helix" evidence="4">
    <location>
        <begin position="158"/>
        <end position="169"/>
    </location>
</feature>
<feature type="helix" evidence="4">
    <location>
        <begin position="173"/>
        <end position="182"/>
    </location>
</feature>
<feature type="turn" evidence="4">
    <location>
        <begin position="187"/>
        <end position="189"/>
    </location>
</feature>
<feature type="helix" evidence="4">
    <location>
        <begin position="190"/>
        <end position="195"/>
    </location>
</feature>
<feature type="helix" evidence="4">
    <location>
        <begin position="196"/>
        <end position="198"/>
    </location>
</feature>
<feature type="helix" evidence="4">
    <location>
        <begin position="202"/>
        <end position="210"/>
    </location>
</feature>
<feature type="turn" evidence="4">
    <location>
        <begin position="211"/>
        <end position="215"/>
    </location>
</feature>
<feature type="helix" evidence="4">
    <location>
        <begin position="219"/>
        <end position="221"/>
    </location>
</feature>
<feature type="helix" evidence="4">
    <location>
        <begin position="224"/>
        <end position="235"/>
    </location>
</feature>
<feature type="helix" evidence="4">
    <location>
        <begin position="240"/>
        <end position="252"/>
    </location>
</feature>
<feature type="helix" evidence="4">
    <location>
        <begin position="254"/>
        <end position="257"/>
    </location>
</feature>
<feature type="turn" evidence="4">
    <location>
        <begin position="258"/>
        <end position="260"/>
    </location>
</feature>
<feature type="helix" evidence="4">
    <location>
        <begin position="262"/>
        <end position="266"/>
    </location>
</feature>
<feature type="turn" evidence="4">
    <location>
        <begin position="267"/>
        <end position="273"/>
    </location>
</feature>
<feature type="helix" evidence="4">
    <location>
        <begin position="275"/>
        <end position="288"/>
    </location>
</feature>
<feature type="helix" evidence="4">
    <location>
        <begin position="290"/>
        <end position="293"/>
    </location>
</feature>
<feature type="helix" evidence="4">
    <location>
        <begin position="300"/>
        <end position="304"/>
    </location>
</feature>
<feature type="helix" evidence="4">
    <location>
        <begin position="308"/>
        <end position="324"/>
    </location>
</feature>
<feature type="helix" evidence="4">
    <location>
        <begin position="327"/>
        <end position="330"/>
    </location>
</feature>
<feature type="helix" evidence="4">
    <location>
        <begin position="336"/>
        <end position="348"/>
    </location>
</feature>
<feature type="turn" evidence="4">
    <location>
        <begin position="349"/>
        <end position="351"/>
    </location>
</feature>
<feature type="helix" evidence="4">
    <location>
        <begin position="353"/>
        <end position="355"/>
    </location>
</feature>
<feature type="helix" evidence="4">
    <location>
        <begin position="356"/>
        <end position="372"/>
    </location>
</feature>
<feature type="helix" evidence="4">
    <location>
        <begin position="378"/>
        <end position="394"/>
    </location>
</feature>
<feature type="helix" evidence="4">
    <location>
        <begin position="399"/>
        <end position="412"/>
    </location>
</feature>
<feature type="strand" evidence="4">
    <location>
        <begin position="413"/>
        <end position="415"/>
    </location>
</feature>
<feature type="helix" evidence="4">
    <location>
        <begin position="416"/>
        <end position="434"/>
    </location>
</feature>
<feature type="helix" evidence="4">
    <location>
        <begin position="492"/>
        <end position="506"/>
    </location>
</feature>
<feature type="helix" evidence="4">
    <location>
        <begin position="515"/>
        <end position="524"/>
    </location>
</feature>
<feature type="helix" evidence="4">
    <location>
        <begin position="526"/>
        <end position="530"/>
    </location>
</feature>
<feature type="helix" evidence="4">
    <location>
        <begin position="535"/>
        <end position="549"/>
    </location>
</feature>
<feature type="helix" evidence="4">
    <location>
        <begin position="553"/>
        <end position="569"/>
    </location>
</feature>
<feature type="helix" evidence="4">
    <location>
        <begin position="572"/>
        <end position="589"/>
    </location>
</feature>
<feature type="helix" evidence="4">
    <location>
        <begin position="592"/>
        <end position="597"/>
    </location>
</feature>
<feature type="helix" evidence="4">
    <location>
        <begin position="598"/>
        <end position="609"/>
    </location>
</feature>
<feature type="helix" evidence="4">
    <location>
        <begin position="615"/>
        <end position="632"/>
    </location>
</feature>
<feature type="helix" evidence="4">
    <location>
        <begin position="636"/>
        <end position="648"/>
    </location>
</feature>
<feature type="helix" evidence="4">
    <location>
        <begin position="650"/>
        <end position="652"/>
    </location>
</feature>
<feature type="helix" evidence="4">
    <location>
        <begin position="656"/>
        <end position="670"/>
    </location>
</feature>
<feature type="helix" evidence="4">
    <location>
        <begin position="674"/>
        <end position="696"/>
    </location>
</feature>
<feature type="helix" evidence="4">
    <location>
        <begin position="704"/>
        <end position="717"/>
    </location>
</feature>
<feature type="helix" evidence="4">
    <location>
        <begin position="720"/>
        <end position="722"/>
    </location>
</feature>
<feature type="helix" evidence="4">
    <location>
        <begin position="741"/>
        <end position="752"/>
    </location>
</feature>
<feature type="turn" evidence="4">
    <location>
        <begin position="753"/>
        <end position="755"/>
    </location>
</feature>
<feature type="helix" evidence="4">
    <location>
        <begin position="760"/>
        <end position="771"/>
    </location>
</feature>
<feature type="strand" evidence="4">
    <location>
        <begin position="776"/>
        <end position="778"/>
    </location>
</feature>
<feature type="helix" evidence="4">
    <location>
        <begin position="780"/>
        <end position="794"/>
    </location>
</feature>
<feature type="helix" evidence="4">
    <location>
        <begin position="802"/>
        <end position="820"/>
    </location>
</feature>
<sequence length="875" mass="100491">MSCIQIISSSQTSIAGHRKLCNKLFTLRTQEGFETDILRALNIILTVKKGNSNADRVLRFLVTFVNYLQQKDPEIDIVQPILKHILRGLDAKDKTVRYRCCQIIARVVNCVKEIDDDLYNTLKEKLLSRVLDRESIVRLEAVVALSRLQEDTGDEENDVRNILLFLLQNDPSSEVRRSVLLNIEVSNSTLPFILERARDVDAANRKCVYARVLPKIGDFRYLSIKKRVRILKWGLNDRDESVEKAAADMLAYQWIENADNNLLELLERLDVSNNSDVAVLAIKKFFDVRVDSLSQLEFPEQFWLELTAESSLLARTFNEICIEKNYTDLLDKMPEVVQLTYYIERQYVSLRDKSSYDESCFIIEQLLYIGLSQDMVDEIGRRKLLKSLTNSLSTMALPDSLISLHIELLRKLCSSENDFCSLLVEIITEVFEQGHSQNQTEEQGNSNAPELNKNDYEGEEITVSQKSPSPSLPPNELNEPEPDDMDGYKEAFNELRCLSYVQCLFENITSSLNENLYMVDMLKTLIIPAVRSHDLPIREKGLECLSLVCLLNADLAFENVPLYLHCYEKGSVVLKCTAIRTLTDMLIQHGKAKFTEYEDAISSILFEALGEFENAELQTLGAEAIAKLLVILHYRDELFLKPLIIQYFEPNTVDNHALRQVLGYFFPVYAFGAHENQWRIATIFCDALLSLLEIYRDLDEDDVQLSIGHIAQQMLDWTDNEKLYERKTQTGDDYIALNHNVHLHLANMIFESLPNASEGKERKFMISLLGKLKIPTDLPSSDYQRTKRKLETYESHGFTMDSTSLSILAKFERMLLQNEEARSKFEETEEERLMENAEENEHAGAEAISGEIIPDTVEANMEDEEEVYVKQEEDL</sequence>
<proteinExistence type="evidence at protein level"/>
<reference key="1">
    <citation type="journal article" date="1999" name="Genes Dev.">
        <title>Fission yeast condensin complex: essential roles of non-SMC subunits for condensation and Cdc2 phosphorylation of Cut3/SMC4.</title>
        <authorList>
            <person name="Sutani T."/>
            <person name="Yuasa T."/>
            <person name="Tomonaga T."/>
            <person name="Dohmae N."/>
            <person name="Takio K."/>
            <person name="Yanagida M."/>
        </authorList>
    </citation>
    <scope>NUCLEOTIDE SEQUENCE [GENOMIC DNA]</scope>
    <scope>PROTEIN SEQUENCE OF 453-466 AND 727-760</scope>
    <scope>FUNCTION</scope>
    <scope>IDENTIFICATION IN A CONDENSIN COMPLEX WITH CUT3; CUT14; CND1 AND CND2</scope>
</reference>
<reference key="2">
    <citation type="journal article" date="2002" name="Nature">
        <title>The genome sequence of Schizosaccharomyces pombe.</title>
        <authorList>
            <person name="Wood V."/>
            <person name="Gwilliam R."/>
            <person name="Rajandream M.A."/>
            <person name="Lyne M.H."/>
            <person name="Lyne R."/>
            <person name="Stewart A."/>
            <person name="Sgouros J.G."/>
            <person name="Peat N."/>
            <person name="Hayles J."/>
            <person name="Baker S.G."/>
            <person name="Basham D."/>
            <person name="Bowman S."/>
            <person name="Brooks K."/>
            <person name="Brown D."/>
            <person name="Brown S."/>
            <person name="Chillingworth T."/>
            <person name="Churcher C.M."/>
            <person name="Collins M."/>
            <person name="Connor R."/>
            <person name="Cronin A."/>
            <person name="Davis P."/>
            <person name="Feltwell T."/>
            <person name="Fraser A."/>
            <person name="Gentles S."/>
            <person name="Goble A."/>
            <person name="Hamlin N."/>
            <person name="Harris D.E."/>
            <person name="Hidalgo J."/>
            <person name="Hodgson G."/>
            <person name="Holroyd S."/>
            <person name="Hornsby T."/>
            <person name="Howarth S."/>
            <person name="Huckle E.J."/>
            <person name="Hunt S."/>
            <person name="Jagels K."/>
            <person name="James K.D."/>
            <person name="Jones L."/>
            <person name="Jones M."/>
            <person name="Leather S."/>
            <person name="McDonald S."/>
            <person name="McLean J."/>
            <person name="Mooney P."/>
            <person name="Moule S."/>
            <person name="Mungall K.L."/>
            <person name="Murphy L.D."/>
            <person name="Niblett D."/>
            <person name="Odell C."/>
            <person name="Oliver K."/>
            <person name="O'Neil S."/>
            <person name="Pearson D."/>
            <person name="Quail M.A."/>
            <person name="Rabbinowitsch E."/>
            <person name="Rutherford K.M."/>
            <person name="Rutter S."/>
            <person name="Saunders D."/>
            <person name="Seeger K."/>
            <person name="Sharp S."/>
            <person name="Skelton J."/>
            <person name="Simmonds M.N."/>
            <person name="Squares R."/>
            <person name="Squares S."/>
            <person name="Stevens K."/>
            <person name="Taylor K."/>
            <person name="Taylor R.G."/>
            <person name="Tivey A."/>
            <person name="Walsh S.V."/>
            <person name="Warren T."/>
            <person name="Whitehead S."/>
            <person name="Woodward J.R."/>
            <person name="Volckaert G."/>
            <person name="Aert R."/>
            <person name="Robben J."/>
            <person name="Grymonprez B."/>
            <person name="Weltjens I."/>
            <person name="Vanstreels E."/>
            <person name="Rieger M."/>
            <person name="Schaefer M."/>
            <person name="Mueller-Auer S."/>
            <person name="Gabel C."/>
            <person name="Fuchs M."/>
            <person name="Duesterhoeft A."/>
            <person name="Fritzc C."/>
            <person name="Holzer E."/>
            <person name="Moestl D."/>
            <person name="Hilbert H."/>
            <person name="Borzym K."/>
            <person name="Langer I."/>
            <person name="Beck A."/>
            <person name="Lehrach H."/>
            <person name="Reinhardt R."/>
            <person name="Pohl T.M."/>
            <person name="Eger P."/>
            <person name="Zimmermann W."/>
            <person name="Wedler H."/>
            <person name="Wambutt R."/>
            <person name="Purnelle B."/>
            <person name="Goffeau A."/>
            <person name="Cadieu E."/>
            <person name="Dreano S."/>
            <person name="Gloux S."/>
            <person name="Lelaure V."/>
            <person name="Mottier S."/>
            <person name="Galibert F."/>
            <person name="Aves S.J."/>
            <person name="Xiang Z."/>
            <person name="Hunt C."/>
            <person name="Moore K."/>
            <person name="Hurst S.M."/>
            <person name="Lucas M."/>
            <person name="Rochet M."/>
            <person name="Gaillardin C."/>
            <person name="Tallada V.A."/>
            <person name="Garzon A."/>
            <person name="Thode G."/>
            <person name="Daga R.R."/>
            <person name="Cruzado L."/>
            <person name="Jimenez J."/>
            <person name="Sanchez M."/>
            <person name="del Rey F."/>
            <person name="Benito J."/>
            <person name="Dominguez A."/>
            <person name="Revuelta J.L."/>
            <person name="Moreno S."/>
            <person name="Armstrong J."/>
            <person name="Forsburg S.L."/>
            <person name="Cerutti L."/>
            <person name="Lowe T."/>
            <person name="McCombie W.R."/>
            <person name="Paulsen I."/>
            <person name="Potashkin J."/>
            <person name="Shpakovski G.V."/>
            <person name="Ussery D."/>
            <person name="Barrell B.G."/>
            <person name="Nurse P."/>
        </authorList>
    </citation>
    <scope>NUCLEOTIDE SEQUENCE [LARGE SCALE GENOMIC DNA]</scope>
    <source>
        <strain>972 / ATCC 24843</strain>
    </source>
</reference>
<protein>
    <recommendedName>
        <fullName>Condensin complex subunit 3</fullName>
    </recommendedName>
    <alternativeName>
        <fullName>CAPG homolog</fullName>
    </alternativeName>
    <alternativeName>
        <fullName>p100</fullName>
    </alternativeName>
</protein>
<dbReference type="EMBL" id="AB030214">
    <property type="protein sequence ID" value="BAA82626.1"/>
    <property type="molecule type" value="Genomic_DNA"/>
</dbReference>
<dbReference type="EMBL" id="CU329672">
    <property type="protein sequence ID" value="CAB41223.1"/>
    <property type="molecule type" value="Genomic_DNA"/>
</dbReference>
<dbReference type="PIR" id="T43522">
    <property type="entry name" value="T43522"/>
</dbReference>
<dbReference type="RefSeq" id="NP_588207.1">
    <property type="nucleotide sequence ID" value="NM_001023197.2"/>
</dbReference>
<dbReference type="PDB" id="5OQR">
    <property type="method" value="X-ray"/>
    <property type="resolution" value="2.61 A"/>
    <property type="chains" value="A/B=1-823"/>
</dbReference>
<dbReference type="PDBsum" id="5OQR"/>
<dbReference type="SMR" id="Q10429"/>
<dbReference type="BioGRID" id="275693">
    <property type="interactions" value="22"/>
</dbReference>
<dbReference type="FunCoup" id="Q10429">
    <property type="interactions" value="322"/>
</dbReference>
<dbReference type="IntAct" id="Q10429">
    <property type="interactions" value="1"/>
</dbReference>
<dbReference type="STRING" id="284812.Q10429"/>
<dbReference type="iPTMnet" id="Q10429"/>
<dbReference type="PaxDb" id="4896-SPCC188.03.1"/>
<dbReference type="EnsemblFungi" id="SPCC188.03.1">
    <property type="protein sequence ID" value="SPCC188.03.1:pep"/>
    <property type="gene ID" value="SPCC188.03"/>
</dbReference>
<dbReference type="GeneID" id="2539121"/>
<dbReference type="KEGG" id="spo:2539121"/>
<dbReference type="PomBase" id="SPCC188.03">
    <property type="gene designation" value="cnd3"/>
</dbReference>
<dbReference type="VEuPathDB" id="FungiDB:SPCC188.03"/>
<dbReference type="eggNOG" id="KOG2025">
    <property type="taxonomic scope" value="Eukaryota"/>
</dbReference>
<dbReference type="HOGENOM" id="CLU_004446_1_0_1"/>
<dbReference type="InParanoid" id="Q10429"/>
<dbReference type="OMA" id="NHQKNFV"/>
<dbReference type="PhylomeDB" id="Q10429"/>
<dbReference type="Reactome" id="R-SPO-2514853">
    <property type="pathway name" value="Condensation of Prometaphase Chromosomes"/>
</dbReference>
<dbReference type="PRO" id="PR:Q10429"/>
<dbReference type="Proteomes" id="UP000002485">
    <property type="component" value="Chromosome III"/>
</dbReference>
<dbReference type="GO" id="GO:0000793">
    <property type="term" value="C:condensed chromosome"/>
    <property type="evidence" value="ECO:0000318"/>
    <property type="project" value="GO_Central"/>
</dbReference>
<dbReference type="GO" id="GO:0000796">
    <property type="term" value="C:condensin complex"/>
    <property type="evidence" value="ECO:0000314"/>
    <property type="project" value="PomBase"/>
</dbReference>
<dbReference type="GO" id="GO:0005737">
    <property type="term" value="C:cytoplasm"/>
    <property type="evidence" value="ECO:0000314"/>
    <property type="project" value="PomBase"/>
</dbReference>
<dbReference type="GO" id="GO:0005829">
    <property type="term" value="C:cytosol"/>
    <property type="evidence" value="ECO:0007005"/>
    <property type="project" value="PomBase"/>
</dbReference>
<dbReference type="GO" id="GO:0005634">
    <property type="term" value="C:nucleus"/>
    <property type="evidence" value="ECO:0000314"/>
    <property type="project" value="PomBase"/>
</dbReference>
<dbReference type="GO" id="GO:0051301">
    <property type="term" value="P:cell division"/>
    <property type="evidence" value="ECO:0007669"/>
    <property type="project" value="UniProtKB-KW"/>
</dbReference>
<dbReference type="GO" id="GO:0007076">
    <property type="term" value="P:mitotic chromosome condensation"/>
    <property type="evidence" value="ECO:0000315"/>
    <property type="project" value="PomBase"/>
</dbReference>
<dbReference type="Gene3D" id="1.25.10.10">
    <property type="entry name" value="Leucine-rich Repeat Variant"/>
    <property type="match status" value="1"/>
</dbReference>
<dbReference type="InterPro" id="IPR011989">
    <property type="entry name" value="ARM-like"/>
</dbReference>
<dbReference type="InterPro" id="IPR016024">
    <property type="entry name" value="ARM-type_fold"/>
</dbReference>
<dbReference type="InterPro" id="IPR027165">
    <property type="entry name" value="CND3"/>
</dbReference>
<dbReference type="InterPro" id="IPR025977">
    <property type="entry name" value="Cnd3_C"/>
</dbReference>
<dbReference type="PANTHER" id="PTHR14418:SF5">
    <property type="entry name" value="CONDENSIN COMPLEX SUBUNIT 3"/>
    <property type="match status" value="1"/>
</dbReference>
<dbReference type="PANTHER" id="PTHR14418">
    <property type="entry name" value="CONDENSIN COMPLEX SUBUNIT 3-RELATED"/>
    <property type="match status" value="1"/>
</dbReference>
<dbReference type="Pfam" id="PF12719">
    <property type="entry name" value="Cnd3"/>
    <property type="match status" value="1"/>
</dbReference>
<dbReference type="SUPFAM" id="SSF48371">
    <property type="entry name" value="ARM repeat"/>
    <property type="match status" value="1"/>
</dbReference>
<keyword id="KW-0002">3D-structure</keyword>
<keyword id="KW-0131">Cell cycle</keyword>
<keyword id="KW-0132">Cell division</keyword>
<keyword id="KW-0158">Chromosome</keyword>
<keyword id="KW-0963">Cytoplasm</keyword>
<keyword id="KW-0903">Direct protein sequencing</keyword>
<keyword id="KW-0226">DNA condensation</keyword>
<keyword id="KW-0498">Mitosis</keyword>
<keyword id="KW-0539">Nucleus</keyword>
<keyword id="KW-1185">Reference proteome</keyword>
<keyword id="KW-0677">Repeat</keyword>
<gene>
    <name type="primary">cnd3</name>
    <name type="ORF">SPCC188.03</name>
</gene>